<reference key="1">
    <citation type="journal article" date="2005" name="PLoS Biol.">
        <title>The genomes of Oryza sativa: a history of duplications.</title>
        <authorList>
            <person name="Yu J."/>
            <person name="Wang J."/>
            <person name="Lin W."/>
            <person name="Li S."/>
            <person name="Li H."/>
            <person name="Zhou J."/>
            <person name="Ni P."/>
            <person name="Dong W."/>
            <person name="Hu S."/>
            <person name="Zeng C."/>
            <person name="Zhang J."/>
            <person name="Zhang Y."/>
            <person name="Li R."/>
            <person name="Xu Z."/>
            <person name="Li S."/>
            <person name="Li X."/>
            <person name="Zheng H."/>
            <person name="Cong L."/>
            <person name="Lin L."/>
            <person name="Yin J."/>
            <person name="Geng J."/>
            <person name="Li G."/>
            <person name="Shi J."/>
            <person name="Liu J."/>
            <person name="Lv H."/>
            <person name="Li J."/>
            <person name="Wang J."/>
            <person name="Deng Y."/>
            <person name="Ran L."/>
            <person name="Shi X."/>
            <person name="Wang X."/>
            <person name="Wu Q."/>
            <person name="Li C."/>
            <person name="Ren X."/>
            <person name="Wang J."/>
            <person name="Wang X."/>
            <person name="Li D."/>
            <person name="Liu D."/>
            <person name="Zhang X."/>
            <person name="Ji Z."/>
            <person name="Zhao W."/>
            <person name="Sun Y."/>
            <person name="Zhang Z."/>
            <person name="Bao J."/>
            <person name="Han Y."/>
            <person name="Dong L."/>
            <person name="Ji J."/>
            <person name="Chen P."/>
            <person name="Wu S."/>
            <person name="Liu J."/>
            <person name="Xiao Y."/>
            <person name="Bu D."/>
            <person name="Tan J."/>
            <person name="Yang L."/>
            <person name="Ye C."/>
            <person name="Zhang J."/>
            <person name="Xu J."/>
            <person name="Zhou Y."/>
            <person name="Yu Y."/>
            <person name="Zhang B."/>
            <person name="Zhuang S."/>
            <person name="Wei H."/>
            <person name="Liu B."/>
            <person name="Lei M."/>
            <person name="Yu H."/>
            <person name="Li Y."/>
            <person name="Xu H."/>
            <person name="Wei S."/>
            <person name="He X."/>
            <person name="Fang L."/>
            <person name="Zhang Z."/>
            <person name="Zhang Y."/>
            <person name="Huang X."/>
            <person name="Su Z."/>
            <person name="Tong W."/>
            <person name="Li J."/>
            <person name="Tong Z."/>
            <person name="Li S."/>
            <person name="Ye J."/>
            <person name="Wang L."/>
            <person name="Fang L."/>
            <person name="Lei T."/>
            <person name="Chen C.-S."/>
            <person name="Chen H.-C."/>
            <person name="Xu Z."/>
            <person name="Li H."/>
            <person name="Huang H."/>
            <person name="Zhang F."/>
            <person name="Xu H."/>
            <person name="Li N."/>
            <person name="Zhao C."/>
            <person name="Li S."/>
            <person name="Dong L."/>
            <person name="Huang Y."/>
            <person name="Li L."/>
            <person name="Xi Y."/>
            <person name="Qi Q."/>
            <person name="Li W."/>
            <person name="Zhang B."/>
            <person name="Hu W."/>
            <person name="Zhang Y."/>
            <person name="Tian X."/>
            <person name="Jiao Y."/>
            <person name="Liang X."/>
            <person name="Jin J."/>
            <person name="Gao L."/>
            <person name="Zheng W."/>
            <person name="Hao B."/>
            <person name="Liu S.-M."/>
            <person name="Wang W."/>
            <person name="Yuan L."/>
            <person name="Cao M."/>
            <person name="McDermott J."/>
            <person name="Samudrala R."/>
            <person name="Wang J."/>
            <person name="Wong G.K.-S."/>
            <person name="Yang H."/>
        </authorList>
    </citation>
    <scope>NUCLEOTIDE SEQUENCE [LARGE SCALE GENOMIC DNA]</scope>
    <source>
        <strain>cv. 93-11</strain>
    </source>
</reference>
<feature type="chain" id="PRO_0000442144" description="WUSCHEL-related homeobox 11">
    <location>
        <begin position="1"/>
        <end position="262"/>
    </location>
</feature>
<feature type="DNA-binding region" description="Homeobox" evidence="2">
    <location>
        <begin position="18"/>
        <end position="82"/>
    </location>
</feature>
<feature type="region of interest" description="Disordered" evidence="3">
    <location>
        <begin position="1"/>
        <end position="21"/>
    </location>
</feature>
<feature type="region of interest" description="Disordered" evidence="3">
    <location>
        <begin position="79"/>
        <end position="115"/>
    </location>
</feature>
<feature type="compositionally biased region" description="Basic and acidic residues" evidence="3">
    <location>
        <begin position="1"/>
        <end position="11"/>
    </location>
</feature>
<feature type="compositionally biased region" description="Low complexity" evidence="3">
    <location>
        <begin position="84"/>
        <end position="112"/>
    </location>
</feature>
<sequence length="262" mass="27588">MDGGHSPDRHAAAAAGEPVRSRWTPKPEQILILESIFNSGMVNPPKDETVRIRKLLERFGAVGDANVFYWFQNRRSRSRRRQRQLQAQAQAAAAAASSGSPPTASSGGLAPGHAGSPASSLGMFAHGAAGYSSSSSSSWPSSPPSVGMMMGDVDYGGGGDDLFAISRQMGYMDGGGGSSSSAAAGQHQQQQLYYSCQPATMTVFINGVATEVPRGPIDLRSMFGQDVMLVHSTGALLPANEYGILLHSLQMGESYFLVTRSS</sequence>
<name>WOX11_ORYSI</name>
<protein>
    <recommendedName>
        <fullName evidence="4">WUSCHEL-related homeobox 11</fullName>
        <shortName evidence="4">OsWOX11</shortName>
    </recommendedName>
</protein>
<accession>B8B644</accession>
<gene>
    <name evidence="4" type="primary">WOX11</name>
    <name evidence="5" type="ORF">OsI_27375</name>
</gene>
<dbReference type="EMBL" id="CM000132">
    <property type="protein sequence ID" value="EEC82705.1"/>
    <property type="molecule type" value="Genomic_DNA"/>
</dbReference>
<dbReference type="SMR" id="B8B644"/>
<dbReference type="STRING" id="39946.B8B644"/>
<dbReference type="EnsemblPlants" id="BGIOSGA026413-TA">
    <property type="protein sequence ID" value="BGIOSGA026413-PA"/>
    <property type="gene ID" value="BGIOSGA026413"/>
</dbReference>
<dbReference type="EnsemblPlants" id="OsGoSa_07g0027900.01">
    <property type="protein sequence ID" value="OsGoSa_07g0027900.01"/>
    <property type="gene ID" value="OsGoSa_07g0027900"/>
</dbReference>
<dbReference type="EnsemblPlants" id="OsIR64_07g0028440.01">
    <property type="protein sequence ID" value="OsIR64_07g0028440.01"/>
    <property type="gene ID" value="OsIR64_07g0028440"/>
</dbReference>
<dbReference type="EnsemblPlants" id="OsKYG_07g0028180.01">
    <property type="protein sequence ID" value="OsKYG_07g0028180.01"/>
    <property type="gene ID" value="OsKYG_07g0028180"/>
</dbReference>
<dbReference type="EnsemblPlants" id="OsLaMu_07g0027790.01">
    <property type="protein sequence ID" value="OsLaMu_07g0027790.01"/>
    <property type="gene ID" value="OsLaMu_07g0027790"/>
</dbReference>
<dbReference type="EnsemblPlants" id="OsLima_07g0027730.01">
    <property type="protein sequence ID" value="OsLima_07g0027730.01"/>
    <property type="gene ID" value="OsLima_07g0027730"/>
</dbReference>
<dbReference type="EnsemblPlants" id="OsLiXu_07g0028230.01">
    <property type="protein sequence ID" value="OsLiXu_07g0028230.01"/>
    <property type="gene ID" value="OsLiXu_07g0028230"/>
</dbReference>
<dbReference type="EnsemblPlants" id="OsMH63_07G027850_01">
    <property type="protein sequence ID" value="OsMH63_07G027850_01"/>
    <property type="gene ID" value="OsMH63_07G027850"/>
</dbReference>
<dbReference type="EnsemblPlants" id="OsPr106_07g0028010.01">
    <property type="protein sequence ID" value="OsPr106_07g0028010.01"/>
    <property type="gene ID" value="OsPr106_07g0028010"/>
</dbReference>
<dbReference type="EnsemblPlants" id="OsZS97_07G027550_01">
    <property type="protein sequence ID" value="OsZS97_07G027550_01"/>
    <property type="gene ID" value="OsZS97_07G027550"/>
</dbReference>
<dbReference type="Gramene" id="BGIOSGA026413-TA">
    <property type="protein sequence ID" value="BGIOSGA026413-PA"/>
    <property type="gene ID" value="BGIOSGA026413"/>
</dbReference>
<dbReference type="Gramene" id="OsGoSa_07g0027900.01">
    <property type="protein sequence ID" value="OsGoSa_07g0027900.01"/>
    <property type="gene ID" value="OsGoSa_07g0027900"/>
</dbReference>
<dbReference type="Gramene" id="OsIR64_07g0028440.01">
    <property type="protein sequence ID" value="OsIR64_07g0028440.01"/>
    <property type="gene ID" value="OsIR64_07g0028440"/>
</dbReference>
<dbReference type="Gramene" id="OsKYG_07g0028180.01">
    <property type="protein sequence ID" value="OsKYG_07g0028180.01"/>
    <property type="gene ID" value="OsKYG_07g0028180"/>
</dbReference>
<dbReference type="Gramene" id="OsLaMu_07g0027790.01">
    <property type="protein sequence ID" value="OsLaMu_07g0027790.01"/>
    <property type="gene ID" value="OsLaMu_07g0027790"/>
</dbReference>
<dbReference type="Gramene" id="OsLima_07g0027730.01">
    <property type="protein sequence ID" value="OsLima_07g0027730.01"/>
    <property type="gene ID" value="OsLima_07g0027730"/>
</dbReference>
<dbReference type="Gramene" id="OsLiXu_07g0028230.01">
    <property type="protein sequence ID" value="OsLiXu_07g0028230.01"/>
    <property type="gene ID" value="OsLiXu_07g0028230"/>
</dbReference>
<dbReference type="Gramene" id="OsMH63_07G027850_01">
    <property type="protein sequence ID" value="OsMH63_07G027850_01"/>
    <property type="gene ID" value="OsMH63_07G027850"/>
</dbReference>
<dbReference type="Gramene" id="OsPr106_07g0028010.01">
    <property type="protein sequence ID" value="OsPr106_07g0028010.01"/>
    <property type="gene ID" value="OsPr106_07g0028010"/>
</dbReference>
<dbReference type="Gramene" id="OsZS97_07G027550_01">
    <property type="protein sequence ID" value="OsZS97_07G027550_01"/>
    <property type="gene ID" value="OsZS97_07G027550"/>
</dbReference>
<dbReference type="HOGENOM" id="CLU_030463_0_0_1"/>
<dbReference type="OMA" id="GHHLMAD"/>
<dbReference type="OrthoDB" id="670226at2759"/>
<dbReference type="Proteomes" id="UP000007015">
    <property type="component" value="Chromosome 7"/>
</dbReference>
<dbReference type="GO" id="GO:0005634">
    <property type="term" value="C:nucleus"/>
    <property type="evidence" value="ECO:0000250"/>
    <property type="project" value="UniProtKB"/>
</dbReference>
<dbReference type="GO" id="GO:0003677">
    <property type="term" value="F:DNA binding"/>
    <property type="evidence" value="ECO:0007669"/>
    <property type="project" value="UniProtKB-KW"/>
</dbReference>
<dbReference type="GO" id="GO:0003700">
    <property type="term" value="F:DNA-binding transcription factor activity"/>
    <property type="evidence" value="ECO:0007669"/>
    <property type="project" value="EnsemblPlants"/>
</dbReference>
<dbReference type="GO" id="GO:0048830">
    <property type="term" value="P:adventitious root development"/>
    <property type="evidence" value="ECO:0007669"/>
    <property type="project" value="InterPro"/>
</dbReference>
<dbReference type="GO" id="GO:0006351">
    <property type="term" value="P:DNA-templated transcription"/>
    <property type="evidence" value="ECO:0007669"/>
    <property type="project" value="EnsemblPlants"/>
</dbReference>
<dbReference type="GO" id="GO:0010311">
    <property type="term" value="P:lateral root formation"/>
    <property type="evidence" value="ECO:0000250"/>
    <property type="project" value="UniProtKB"/>
</dbReference>
<dbReference type="FunFam" id="1.10.10.60:FF:000118">
    <property type="entry name" value="WUSCHEL-related homeobox 11"/>
    <property type="match status" value="1"/>
</dbReference>
<dbReference type="Gene3D" id="1.10.10.60">
    <property type="entry name" value="Homeodomain-like"/>
    <property type="match status" value="1"/>
</dbReference>
<dbReference type="InterPro" id="IPR001356">
    <property type="entry name" value="HD"/>
</dbReference>
<dbReference type="InterPro" id="IPR009057">
    <property type="entry name" value="Homeodomain-like_sf"/>
</dbReference>
<dbReference type="InterPro" id="IPR044558">
    <property type="entry name" value="WOX11-like"/>
</dbReference>
<dbReference type="PANTHER" id="PTHR46998">
    <property type="entry name" value="WUSCHEL-RELATED HOMEOBOX 11"/>
    <property type="match status" value="1"/>
</dbReference>
<dbReference type="PANTHER" id="PTHR46998:SF11">
    <property type="entry name" value="WUSCHEL-RELATED HOMEOBOX 11"/>
    <property type="match status" value="1"/>
</dbReference>
<dbReference type="Pfam" id="PF00046">
    <property type="entry name" value="Homeodomain"/>
    <property type="match status" value="1"/>
</dbReference>
<dbReference type="SMART" id="SM00389">
    <property type="entry name" value="HOX"/>
    <property type="match status" value="1"/>
</dbReference>
<dbReference type="SUPFAM" id="SSF46689">
    <property type="entry name" value="Homeodomain-like"/>
    <property type="match status" value="1"/>
</dbReference>
<dbReference type="PROSITE" id="PS50071">
    <property type="entry name" value="HOMEOBOX_2"/>
    <property type="match status" value="1"/>
</dbReference>
<proteinExistence type="inferred from homology"/>
<organism>
    <name type="scientific">Oryza sativa subsp. indica</name>
    <name type="common">Rice</name>
    <dbReference type="NCBI Taxonomy" id="39946"/>
    <lineage>
        <taxon>Eukaryota</taxon>
        <taxon>Viridiplantae</taxon>
        <taxon>Streptophyta</taxon>
        <taxon>Embryophyta</taxon>
        <taxon>Tracheophyta</taxon>
        <taxon>Spermatophyta</taxon>
        <taxon>Magnoliopsida</taxon>
        <taxon>Liliopsida</taxon>
        <taxon>Poales</taxon>
        <taxon>Poaceae</taxon>
        <taxon>BOP clade</taxon>
        <taxon>Oryzoideae</taxon>
        <taxon>Oryzeae</taxon>
        <taxon>Oryzinae</taxon>
        <taxon>Oryza</taxon>
        <taxon>Oryza sativa</taxon>
    </lineage>
</organism>
<comment type="function">
    <text evidence="1">Transcription factor which may be involved in developmental processes. Promotes the development of crown roots (both initiation and elongation), main components of the fibrous root system, by regulating the expression of genes required for crown root development and hormone-responsive genes involved in cytokinin (e.g. RR1, RR2, RR3 and RR4) and auxin (e.g. IAA5, IAA11, IAA23 and IAA31) signaling.</text>
</comment>
<comment type="subunit">
    <text evidence="1">Interacts with ERF3.</text>
</comment>
<comment type="subcellular location">
    <subcellularLocation>
        <location evidence="2">Nucleus</location>
    </subcellularLocation>
</comment>
<comment type="similarity">
    <text evidence="4">Belongs to the WUS homeobox family.</text>
</comment>
<evidence type="ECO:0000250" key="1">
    <source>
        <dbReference type="UniProtKB" id="Q0D3I7"/>
    </source>
</evidence>
<evidence type="ECO:0000255" key="2">
    <source>
        <dbReference type="PROSITE-ProRule" id="PRU00108"/>
    </source>
</evidence>
<evidence type="ECO:0000256" key="3">
    <source>
        <dbReference type="SAM" id="MobiDB-lite"/>
    </source>
</evidence>
<evidence type="ECO:0000305" key="4"/>
<evidence type="ECO:0000312" key="5">
    <source>
        <dbReference type="EMBL" id="EEC82705.1"/>
    </source>
</evidence>
<keyword id="KW-0217">Developmental protein</keyword>
<keyword id="KW-0238">DNA-binding</keyword>
<keyword id="KW-0371">Homeobox</keyword>
<keyword id="KW-0539">Nucleus</keyword>
<keyword id="KW-1185">Reference proteome</keyword>
<keyword id="KW-0804">Transcription</keyword>
<keyword id="KW-0805">Transcription regulation</keyword>